<organism>
    <name type="scientific">Leptospira interrogans serogroup Icterohaemorrhagiae serovar copenhageni (strain Fiocruz L1-130)</name>
    <dbReference type="NCBI Taxonomy" id="267671"/>
    <lineage>
        <taxon>Bacteria</taxon>
        <taxon>Pseudomonadati</taxon>
        <taxon>Spirochaetota</taxon>
        <taxon>Spirochaetia</taxon>
        <taxon>Leptospirales</taxon>
        <taxon>Leptospiraceae</taxon>
        <taxon>Leptospira</taxon>
    </lineage>
</organism>
<reference key="1">
    <citation type="journal article" date="2004" name="J. Bacteriol.">
        <title>Comparative genomics of two Leptospira interrogans serovars reveals novel insights into physiology and pathogenesis.</title>
        <authorList>
            <person name="Nascimento A.L.T.O."/>
            <person name="Ko A.I."/>
            <person name="Martins E.A.L."/>
            <person name="Monteiro-Vitorello C.B."/>
            <person name="Ho P.L."/>
            <person name="Haake D.A."/>
            <person name="Verjovski-Almeida S."/>
            <person name="Hartskeerl R.A."/>
            <person name="Marques M.V."/>
            <person name="Oliveira M.C."/>
            <person name="Menck C.F.M."/>
            <person name="Leite L.C.C."/>
            <person name="Carrer H."/>
            <person name="Coutinho L.L."/>
            <person name="Degrave W.M."/>
            <person name="Dellagostin O.A."/>
            <person name="El-Dorry H."/>
            <person name="Ferro E.S."/>
            <person name="Ferro M.I.T."/>
            <person name="Furlan L.R."/>
            <person name="Gamberini M."/>
            <person name="Giglioti E.A."/>
            <person name="Goes-Neto A."/>
            <person name="Goldman G.H."/>
            <person name="Goldman M.H.S."/>
            <person name="Harakava R."/>
            <person name="Jeronimo S.M.B."/>
            <person name="Junqueira-de-Azevedo I.L.M."/>
            <person name="Kimura E.T."/>
            <person name="Kuramae E.E."/>
            <person name="Lemos E.G.M."/>
            <person name="Lemos M.V.F."/>
            <person name="Marino C.L."/>
            <person name="Nunes L.R."/>
            <person name="de Oliveira R.C."/>
            <person name="Pereira G.G."/>
            <person name="Reis M.S."/>
            <person name="Schriefer A."/>
            <person name="Siqueira W.J."/>
            <person name="Sommer P."/>
            <person name="Tsai S.M."/>
            <person name="Simpson A.J.G."/>
            <person name="Ferro J.A."/>
            <person name="Camargo L.E.A."/>
            <person name="Kitajima J.P."/>
            <person name="Setubal J.C."/>
            <person name="Van Sluys M.A."/>
        </authorList>
    </citation>
    <scope>NUCLEOTIDE SEQUENCE [LARGE SCALE GENOMIC DNA]</scope>
    <source>
        <strain>Fiocruz L1-130</strain>
    </source>
</reference>
<name>CBID_LEPIC</name>
<evidence type="ECO:0000255" key="1">
    <source>
        <dbReference type="HAMAP-Rule" id="MF_00787"/>
    </source>
</evidence>
<sequence length="367" mass="39033">MTGKKLKEGFTTGACSAAAAKAATRLLLKGKPILEIETTLPNKRQVLFTVKRCQLEGEVATCSVVKDAGDDPDCTHGAELTARVRLTKENEIKLKGGDGVAVVTKAGLGLEIGQSAINPIPRKNIKEMILEELQGSSFNGAEVEISVPGGQEMAKKTMNERLGLIGGISILGTTGIVKPYSTAAFKASVIQAIQMAKEYGIDTIVLTTGGKSEKFAMDLLPNLNELSFIQVGDFIGTGIKTSVKESIRHTIIVGMIGKLSKMADGVMMTHRGGSSVNTTMLSTIARSIGVPEEIAIEIQNANTARHVLEICKVSGYKIITTKICEIVAEKCSKHAGTNIMISCYMVDFDGKLLGKCENFSPNVGLNL</sequence>
<comment type="function">
    <text evidence="1">Catalyzes the methylation of C-1 in cobalt-precorrin-5B to form cobalt-precorrin-6A.</text>
</comment>
<comment type="catalytic activity">
    <reaction evidence="1">
        <text>Co-precorrin-5B + S-adenosyl-L-methionine = Co-precorrin-6A + S-adenosyl-L-homocysteine</text>
        <dbReference type="Rhea" id="RHEA:26285"/>
        <dbReference type="ChEBI" id="CHEBI:57856"/>
        <dbReference type="ChEBI" id="CHEBI:59789"/>
        <dbReference type="ChEBI" id="CHEBI:60063"/>
        <dbReference type="ChEBI" id="CHEBI:60064"/>
        <dbReference type="EC" id="2.1.1.195"/>
    </reaction>
</comment>
<comment type="pathway">
    <text evidence="1">Cofactor biosynthesis; adenosylcobalamin biosynthesis; cob(II)yrinate a,c-diamide from sirohydrochlorin (anaerobic route): step 6/10.</text>
</comment>
<comment type="similarity">
    <text evidence="1">Belongs to the CbiD family.</text>
</comment>
<gene>
    <name evidence="1" type="primary">cbiD</name>
    <name type="ordered locus">LIC_20132</name>
</gene>
<feature type="chain" id="PRO_0000141668" description="Cobalt-precorrin-5B C(1)-methyltransferase">
    <location>
        <begin position="1"/>
        <end position="367"/>
    </location>
</feature>
<protein>
    <recommendedName>
        <fullName evidence="1">Cobalt-precorrin-5B C(1)-methyltransferase</fullName>
        <ecNumber evidence="1">2.1.1.195</ecNumber>
    </recommendedName>
    <alternativeName>
        <fullName evidence="1">Cobalt-precorrin-6A synthase</fullName>
    </alternativeName>
</protein>
<dbReference type="EC" id="2.1.1.195" evidence="1"/>
<dbReference type="EMBL" id="AE016824">
    <property type="protein sequence ID" value="AAS72160.1"/>
    <property type="molecule type" value="Genomic_DNA"/>
</dbReference>
<dbReference type="RefSeq" id="WP_000145960.1">
    <property type="nucleotide sequence ID" value="NC_005824.1"/>
</dbReference>
<dbReference type="SMR" id="P61986"/>
<dbReference type="KEGG" id="lic:LIC_20132"/>
<dbReference type="HOGENOM" id="CLU_041273_0_0_12"/>
<dbReference type="UniPathway" id="UPA00148">
    <property type="reaction ID" value="UER00227"/>
</dbReference>
<dbReference type="Proteomes" id="UP000007037">
    <property type="component" value="Chromosome II"/>
</dbReference>
<dbReference type="GO" id="GO:0043780">
    <property type="term" value="F:cobalt-precorrin-5B C1-methyltransferase activity"/>
    <property type="evidence" value="ECO:0007669"/>
    <property type="project" value="RHEA"/>
</dbReference>
<dbReference type="GO" id="GO:0019251">
    <property type="term" value="P:anaerobic cobalamin biosynthetic process"/>
    <property type="evidence" value="ECO:0007669"/>
    <property type="project" value="UniProtKB-UniRule"/>
</dbReference>
<dbReference type="GO" id="GO:0032259">
    <property type="term" value="P:methylation"/>
    <property type="evidence" value="ECO:0007669"/>
    <property type="project" value="UniProtKB-KW"/>
</dbReference>
<dbReference type="Gene3D" id="3.30.2110.10">
    <property type="entry name" value="CbiD-like"/>
    <property type="match status" value="1"/>
</dbReference>
<dbReference type="HAMAP" id="MF_00787">
    <property type="entry name" value="CbiD"/>
    <property type="match status" value="1"/>
</dbReference>
<dbReference type="InterPro" id="IPR002748">
    <property type="entry name" value="CbiD"/>
</dbReference>
<dbReference type="InterPro" id="IPR036074">
    <property type="entry name" value="CbiD_sf"/>
</dbReference>
<dbReference type="NCBIfam" id="TIGR00312">
    <property type="entry name" value="cbiD"/>
    <property type="match status" value="1"/>
</dbReference>
<dbReference type="NCBIfam" id="NF000849">
    <property type="entry name" value="PRK00075.1-1"/>
    <property type="match status" value="1"/>
</dbReference>
<dbReference type="PANTHER" id="PTHR35863">
    <property type="entry name" value="COBALT-PRECORRIN-5B C(1)-METHYLTRANSFERASE"/>
    <property type="match status" value="1"/>
</dbReference>
<dbReference type="PANTHER" id="PTHR35863:SF1">
    <property type="entry name" value="COBALT-PRECORRIN-5B C(1)-METHYLTRANSFERASE"/>
    <property type="match status" value="1"/>
</dbReference>
<dbReference type="Pfam" id="PF01888">
    <property type="entry name" value="CbiD"/>
    <property type="match status" value="1"/>
</dbReference>
<dbReference type="PIRSF" id="PIRSF026782">
    <property type="entry name" value="CbiD"/>
    <property type="match status" value="1"/>
</dbReference>
<dbReference type="SUPFAM" id="SSF111342">
    <property type="entry name" value="CbiD-like"/>
    <property type="match status" value="1"/>
</dbReference>
<proteinExistence type="inferred from homology"/>
<keyword id="KW-0169">Cobalamin biosynthesis</keyword>
<keyword id="KW-0489">Methyltransferase</keyword>
<keyword id="KW-0949">S-adenosyl-L-methionine</keyword>
<keyword id="KW-0808">Transferase</keyword>
<accession>P61986</accession>